<keyword id="KW-0002">3D-structure</keyword>
<keyword id="KW-0143">Chaperone</keyword>
<keyword id="KW-0963">Cytoplasm</keyword>
<keyword id="KW-0479">Metal-binding</keyword>
<keyword id="KW-0496">Mitochondrion</keyword>
<keyword id="KW-1267">Proteomics identification</keyword>
<keyword id="KW-1185">Reference proteome</keyword>
<reference key="1">
    <citation type="journal article" date="2003" name="J. Hum. Genet.">
        <title>Identification of a novel candidate gene in the iron-sulfur pathway implicated in ataxia-susceptibility: human gene encoding HscB, a J-type co-chaperone.</title>
        <authorList>
            <person name="Sun G."/>
            <person name="Gargus J.J."/>
            <person name="Ta D.T."/>
            <person name="Vickery L.E."/>
        </authorList>
    </citation>
    <scope>NUCLEOTIDE SEQUENCE [MRNA]</scope>
    <scope>TISSUE SPECIFICITY</scope>
</reference>
<reference key="2">
    <citation type="journal article" date="2004" name="Genome Biol.">
        <title>A genome annotation-driven approach to cloning the human ORFeome.</title>
        <authorList>
            <person name="Collins J.E."/>
            <person name="Wright C.L."/>
            <person name="Edwards C.A."/>
            <person name="Davis M.P."/>
            <person name="Grinham J.A."/>
            <person name="Cole C.G."/>
            <person name="Goward M.E."/>
            <person name="Aguado B."/>
            <person name="Mallya M."/>
            <person name="Mokrab Y."/>
            <person name="Huckle E.J."/>
            <person name="Beare D.M."/>
            <person name="Dunham I."/>
        </authorList>
    </citation>
    <scope>NUCLEOTIDE SEQUENCE [LARGE SCALE MRNA]</scope>
</reference>
<reference key="3">
    <citation type="journal article" date="1999" name="Nature">
        <title>The DNA sequence of human chromosome 22.</title>
        <authorList>
            <person name="Dunham I."/>
            <person name="Hunt A.R."/>
            <person name="Collins J.E."/>
            <person name="Bruskiewich R."/>
            <person name="Beare D.M."/>
            <person name="Clamp M."/>
            <person name="Smink L.J."/>
            <person name="Ainscough R."/>
            <person name="Almeida J.P."/>
            <person name="Babbage A.K."/>
            <person name="Bagguley C."/>
            <person name="Bailey J."/>
            <person name="Barlow K.F."/>
            <person name="Bates K.N."/>
            <person name="Beasley O.P."/>
            <person name="Bird C.P."/>
            <person name="Blakey S.E."/>
            <person name="Bridgeman A.M."/>
            <person name="Buck D."/>
            <person name="Burgess J."/>
            <person name="Burrill W.D."/>
            <person name="Burton J."/>
            <person name="Carder C."/>
            <person name="Carter N.P."/>
            <person name="Chen Y."/>
            <person name="Clark G."/>
            <person name="Clegg S.M."/>
            <person name="Cobley V.E."/>
            <person name="Cole C.G."/>
            <person name="Collier R.E."/>
            <person name="Connor R."/>
            <person name="Conroy D."/>
            <person name="Corby N.R."/>
            <person name="Coville G.J."/>
            <person name="Cox A.V."/>
            <person name="Davis J."/>
            <person name="Dawson E."/>
            <person name="Dhami P.D."/>
            <person name="Dockree C."/>
            <person name="Dodsworth S.J."/>
            <person name="Durbin R.M."/>
            <person name="Ellington A.G."/>
            <person name="Evans K.L."/>
            <person name="Fey J.M."/>
            <person name="Fleming K."/>
            <person name="French L."/>
            <person name="Garner A.A."/>
            <person name="Gilbert J.G.R."/>
            <person name="Goward M.E."/>
            <person name="Grafham D.V."/>
            <person name="Griffiths M.N.D."/>
            <person name="Hall C."/>
            <person name="Hall R.E."/>
            <person name="Hall-Tamlyn G."/>
            <person name="Heathcott R.W."/>
            <person name="Ho S."/>
            <person name="Holmes S."/>
            <person name="Hunt S.E."/>
            <person name="Jones M.C."/>
            <person name="Kershaw J."/>
            <person name="Kimberley A.M."/>
            <person name="King A."/>
            <person name="Laird G.K."/>
            <person name="Langford C.F."/>
            <person name="Leversha M.A."/>
            <person name="Lloyd C."/>
            <person name="Lloyd D.M."/>
            <person name="Martyn I.D."/>
            <person name="Mashreghi-Mohammadi M."/>
            <person name="Matthews L.H."/>
            <person name="Mccann O.T."/>
            <person name="Mcclay J."/>
            <person name="Mclaren S."/>
            <person name="McMurray A.A."/>
            <person name="Milne S.A."/>
            <person name="Mortimore B.J."/>
            <person name="Odell C.N."/>
            <person name="Pavitt R."/>
            <person name="Pearce A.V."/>
            <person name="Pearson D."/>
            <person name="Phillimore B.J.C.T."/>
            <person name="Phillips S.H."/>
            <person name="Plumb R.W."/>
            <person name="Ramsay H."/>
            <person name="Ramsey Y."/>
            <person name="Rogers L."/>
            <person name="Ross M.T."/>
            <person name="Scott C.E."/>
            <person name="Sehra H.K."/>
            <person name="Skuce C.D."/>
            <person name="Smalley S."/>
            <person name="Smith M.L."/>
            <person name="Soderlund C."/>
            <person name="Spragon L."/>
            <person name="Steward C.A."/>
            <person name="Sulston J.E."/>
            <person name="Swann R.M."/>
            <person name="Vaudin M."/>
            <person name="Wall M."/>
            <person name="Wallis J.M."/>
            <person name="Whiteley M.N."/>
            <person name="Willey D.L."/>
            <person name="Williams L."/>
            <person name="Williams S.A."/>
            <person name="Williamson H."/>
            <person name="Wilmer T.E."/>
            <person name="Wilming L."/>
            <person name="Wright C.L."/>
            <person name="Hubbard T."/>
            <person name="Bentley D.R."/>
            <person name="Beck S."/>
            <person name="Rogers J."/>
            <person name="Shimizu N."/>
            <person name="Minoshima S."/>
            <person name="Kawasaki K."/>
            <person name="Sasaki T."/>
            <person name="Asakawa S."/>
            <person name="Kudoh J."/>
            <person name="Shintani A."/>
            <person name="Shibuya K."/>
            <person name="Yoshizaki Y."/>
            <person name="Aoki N."/>
            <person name="Mitsuyama S."/>
            <person name="Roe B.A."/>
            <person name="Chen F."/>
            <person name="Chu L."/>
            <person name="Crabtree J."/>
            <person name="Deschamps S."/>
            <person name="Do A."/>
            <person name="Do T."/>
            <person name="Dorman A."/>
            <person name="Fang F."/>
            <person name="Fu Y."/>
            <person name="Hu P."/>
            <person name="Hua A."/>
            <person name="Kenton S."/>
            <person name="Lai H."/>
            <person name="Lao H.I."/>
            <person name="Lewis J."/>
            <person name="Lewis S."/>
            <person name="Lin S.-P."/>
            <person name="Loh P."/>
            <person name="Malaj E."/>
            <person name="Nguyen T."/>
            <person name="Pan H."/>
            <person name="Phan S."/>
            <person name="Qi S."/>
            <person name="Qian Y."/>
            <person name="Ray L."/>
            <person name="Ren Q."/>
            <person name="Shaull S."/>
            <person name="Sloan D."/>
            <person name="Song L."/>
            <person name="Wang Q."/>
            <person name="Wang Y."/>
            <person name="Wang Z."/>
            <person name="White J."/>
            <person name="Willingham D."/>
            <person name="Wu H."/>
            <person name="Yao Z."/>
            <person name="Zhan M."/>
            <person name="Zhang G."/>
            <person name="Chissoe S."/>
            <person name="Murray J."/>
            <person name="Miller N."/>
            <person name="Minx P."/>
            <person name="Fulton R."/>
            <person name="Johnson D."/>
            <person name="Bemis G."/>
            <person name="Bentley D."/>
            <person name="Bradshaw H."/>
            <person name="Bourne S."/>
            <person name="Cordes M."/>
            <person name="Du Z."/>
            <person name="Fulton L."/>
            <person name="Goela D."/>
            <person name="Graves T."/>
            <person name="Hawkins J."/>
            <person name="Hinds K."/>
            <person name="Kemp K."/>
            <person name="Latreille P."/>
            <person name="Layman D."/>
            <person name="Ozersky P."/>
            <person name="Rohlfing T."/>
            <person name="Scheet P."/>
            <person name="Walker C."/>
            <person name="Wamsley A."/>
            <person name="Wohldmann P."/>
            <person name="Pepin K."/>
            <person name="Nelson J."/>
            <person name="Korf I."/>
            <person name="Bedell J.A."/>
            <person name="Hillier L.W."/>
            <person name="Mardis E."/>
            <person name="Waterston R."/>
            <person name="Wilson R."/>
            <person name="Emanuel B.S."/>
            <person name="Shaikh T."/>
            <person name="Kurahashi H."/>
            <person name="Saitta S."/>
            <person name="Budarf M.L."/>
            <person name="McDermid H.E."/>
            <person name="Johnson A."/>
            <person name="Wong A.C.C."/>
            <person name="Morrow B.E."/>
            <person name="Edelmann L."/>
            <person name="Kim U.J."/>
            <person name="Shizuya H."/>
            <person name="Simon M.I."/>
            <person name="Dumanski J.P."/>
            <person name="Peyrard M."/>
            <person name="Kedra D."/>
            <person name="Seroussi E."/>
            <person name="Fransson I."/>
            <person name="Tapia I."/>
            <person name="Bruder C.E."/>
            <person name="O'Brien K.P."/>
            <person name="Wilkinson P."/>
            <person name="Bodenteich A."/>
            <person name="Hartman K."/>
            <person name="Hu X."/>
            <person name="Khan A.S."/>
            <person name="Lane L."/>
            <person name="Tilahun Y."/>
            <person name="Wright H."/>
        </authorList>
    </citation>
    <scope>NUCLEOTIDE SEQUENCE [LARGE SCALE GENOMIC DNA]</scope>
</reference>
<reference key="4">
    <citation type="journal article" date="2004" name="Genome Res.">
        <title>The status, quality, and expansion of the NIH full-length cDNA project: the Mammalian Gene Collection (MGC).</title>
        <authorList>
            <consortium name="The MGC Project Team"/>
        </authorList>
    </citation>
    <scope>NUCLEOTIDE SEQUENCE [LARGE SCALE MRNA]</scope>
    <source>
        <tissue>Eye</tissue>
    </source>
</reference>
<reference key="5">
    <citation type="journal article" date="2010" name="Hum. Mol. Genet.">
        <title>Characterization of the human HSC20, an unusual DnaJ type III protein, involved in iron-sulfur cluster biogenesis.</title>
        <authorList>
            <person name="Uhrigshardt H."/>
            <person name="Singh A."/>
            <person name="Kovtunovych G."/>
            <person name="Ghosh M."/>
            <person name="Rouault T.A."/>
        </authorList>
    </citation>
    <scope>FUNCTION</scope>
    <scope>INTERACTION WITH ISCU AND HSPA9</scope>
    <scope>SUBCELLULAR LOCATION</scope>
    <scope>TISSUE SPECIFICITY</scope>
    <scope>MUTAGENESIS OF CYS-41; CYS-44; CYS-58; CYS-61 AND 102-HIS--ASP-104</scope>
</reference>
<reference key="6">
    <citation type="journal article" date="2011" name="BMC Syst. Biol.">
        <title>Initial characterization of the human central proteome.</title>
        <authorList>
            <person name="Burkard T.R."/>
            <person name="Planyavsky M."/>
            <person name="Kaupe I."/>
            <person name="Breitwieser F.P."/>
            <person name="Buerckstuemmer T."/>
            <person name="Bennett K.L."/>
            <person name="Superti-Furga G."/>
            <person name="Colinge J."/>
        </authorList>
    </citation>
    <scope>IDENTIFICATION BY MASS SPECTROMETRY [LARGE SCALE ANALYSIS]</scope>
</reference>
<reference key="7">
    <citation type="journal article" date="2016" name="Cell Metab.">
        <title>Disease-causing SDHAF1 mutations impair transfer of Fe-S clusters to SDHB.</title>
        <authorList>
            <person name="Maio N."/>
            <person name="Ghezzi D."/>
            <person name="Verrigni D."/>
            <person name="Rizza T."/>
            <person name="Bertini E."/>
            <person name="Martinelli D."/>
            <person name="Zeviani M."/>
            <person name="Singh A."/>
            <person name="Carrozzo R."/>
            <person name="Rouault T.A."/>
        </authorList>
    </citation>
    <scope>FUNCTION</scope>
    <scope>INTERACTION WITH SDHAF1</scope>
</reference>
<reference key="8">
    <citation type="journal article" date="2018" name="Hum. Mol. Genet.">
        <title>Cytosolic HSC20 integrates de novo iron-sulfur cluster biogenesis with the CIAO1-mediated transfer to recipients.</title>
        <authorList>
            <person name="Kim K.S."/>
            <person name="Maio N."/>
            <person name="Singh A."/>
            <person name="Rouault T.A."/>
        </authorList>
    </citation>
    <scope>FUNCTION</scope>
    <scope>SUBUNIT</scope>
    <scope>INTERACTION WITH CIAO1 AND ISCU</scope>
    <scope>SUBCELLULAR LOCATION</scope>
    <scope>MUTAGENESIS OF CYS-41; CYS-44; CYS-58 AND CYS-61</scope>
    <scope>IDENTIFICATION BY MASS SPECTROMETRY</scope>
</reference>
<reference key="9">
    <citation type="journal article" date="2020" name="J. Clin. Invest.">
        <title>Mutations in the iron-sulfur cluster biogenesis protein HSCB cause congenital sideroblastic anemia.</title>
        <authorList>
            <person name="Crispin A."/>
            <person name="Guo C."/>
            <person name="Chen C."/>
            <person name="Campagna D.R."/>
            <person name="Schmidt P.J."/>
            <person name="Lichtenstein D."/>
            <person name="Cao C."/>
            <person name="Sendamarai A.K."/>
            <person name="Hildick-Smith G.J."/>
            <person name="Huston N.C."/>
            <person name="Boudreaux J."/>
            <person name="Bottomley S.S."/>
            <person name="Heeney M.M."/>
            <person name="Paw B.H."/>
            <person name="Fleming M.D."/>
            <person name="Ducamp S."/>
        </authorList>
    </citation>
    <scope>INVOLVEMENT IN SIDBA5</scope>
</reference>
<reference key="10">
    <citation type="journal article" date="2008" name="J. Biol. Chem.">
        <title>Structure of human J-type co-chaperone HscB reveals a tetracysteine metal-binding domain.</title>
        <authorList>
            <person name="Bitto E."/>
            <person name="Bingman C.A."/>
            <person name="Bittova L."/>
            <person name="Kondrashov D.A."/>
            <person name="Bannen R.M."/>
            <person name="Fox B.G."/>
            <person name="Markley J.L."/>
            <person name="Phillips G.N. Jr."/>
        </authorList>
    </citation>
    <scope>X-RAY CRYSTALLOGRAPHY (3.0 ANGSTROMS) OF 30-235</scope>
    <scope>METAL-BINDING SITES</scope>
</reference>
<gene>
    <name evidence="12" type="primary">HSCB</name>
    <name type="synonym">DNAJC20</name>
    <name type="synonym">HSC20</name>
</gene>
<sequence length="235" mass="27422">MWRGRAGALLRVWGFWPTGVPRRRPLSCDAASQAGSNYPRCWNCGGPWGPGREDRFFCPQCRALQAPDPTRDYFSLMDCNRSFRVDTAKLQHRYQQLQRLVHPDFFSQRSQTEKDFSEKHSTLVNDAYKTLLAPLSRGLYLLKLHGIEIPERTDYEMDRQFLIEIMEINEKLAEAESEAAMKEIESIVKAKQKEFTDNVSSAFEQDDFEEAKEILTKMRYFSNIEEKIKLKKIPL</sequence>
<comment type="function">
    <molecule>Iron-sulfur cluster co-chaperone protein HscB, mitochondrial</molecule>
    <text evidence="1 5 6">Acts as a co-chaperone in iron-sulfur cluster assembly in mitochondria (PubMed:20668094). Required for incorporation of iron-sulfur clusters into SDHB, the iron-sulfur protein subunit of succinate dehydrogenase that is involved in complex II of the mitochondrial electron transport chain (PubMed:26749241). Recruited to SDHB by interaction with SDHAF1 which first binds SDHB and then recruits the iron-sulfur transfer complex formed by HSC20, HSPA9 and ISCU through direct binding to HSC20 (PubMed:26749241). Plays an essential role in hematopoiesis (By similarity).</text>
</comment>
<comment type="function">
    <molecule>Iron-sulfur cluster co-chaperone protein HscB, cytoplasmic</molecule>
    <text evidence="7">Acts as a co-chaperone in iron-sulfur cluster assembly in the cytoplasm (PubMed:29309586). Also mediates complex formation between components of the cytosolic iron-sulfur biogenesis pathway and the CIA targeting complex composed of CIAO1, DIPK1B/FAM69B and MMS19 by binding directly to the scaffold protein ISCU and to CIAO1 (PubMed:29309586). This facilitates iron-sulfur cluster insertion into a number of cytoplasmic and nuclear proteins including POLD1, ELP3, DPYD and PPAT (PubMed:29309586).</text>
</comment>
<comment type="pathway">
    <text>Cofactor biosynthesis; iron-sulfur cluster biosynthesis.</text>
</comment>
<comment type="subunit">
    <molecule>Iron-sulfur cluster co-chaperone protein HscB, mitochondrial</molecule>
    <text evidence="5 6">Interacts with ISCU and HSPA9 to form an iron-sulfur transfer complex (PubMed:20668094). Interacts with SDHAF1 (via the first LYR motif); the interaction recruits the iron-sulfur transfer complex composed of HSC20, HSPA9 and ISCU and mediates the incorporation of iron-sulfur clusters into SDHB which also interacts with HSC20 (PubMed:26749241). Interacts with the cytoplasmic form of ISCU and with CIA complex member CIAO1 (via LYR motif) (PubMed:29309586).</text>
</comment>
<comment type="subunit">
    <molecule>Iron-sulfur cluster co-chaperone protein HscB, cytoplasmic</molecule>
    <text evidence="7">Homodimer (PubMed:29309586). Interacts with ISCU (cytoplasmic form); this interaction stabilizes the (Fe-S) clusters on ISCU (PubMed:29309586). Interacts with the CIA complex member CIAO1 (via LYR motif) (PubMed:29309586).</text>
</comment>
<comment type="interaction">
    <interactant intactId="EBI-1805738">
        <id>Q8IWL3</id>
    </interactant>
    <interactant intactId="EBI-741181">
        <id>Q6RW13</id>
        <label>AGTRAP</label>
    </interactant>
    <organismsDiffer>false</organismsDiffer>
    <experiments>4</experiments>
</comment>
<comment type="interaction">
    <interactant intactId="EBI-1805738">
        <id>Q8IWL3</id>
    </interactant>
    <interactant intactId="EBI-355315">
        <id>P07814</id>
        <label>EPRS1</label>
    </interactant>
    <organismsDiffer>false</organismsDiffer>
    <experiments>4</experiments>
</comment>
<comment type="interaction">
    <interactant intactId="EBI-1805738">
        <id>Q8IWL3</id>
    </interactant>
    <interactant intactId="EBI-1052886">
        <id>P13804</id>
        <label>ETFA</label>
    </interactant>
    <organismsDiffer>false</organismsDiffer>
    <experiments>3</experiments>
</comment>
<comment type="interaction">
    <interactant intactId="EBI-1805738">
        <id>Q8IWL3</id>
    </interactant>
    <interactant intactId="EBI-1049910">
        <id>Q86SX6</id>
        <label>GLRX5</label>
    </interactant>
    <organismsDiffer>false</organismsDiffer>
    <experiments>3</experiments>
</comment>
<comment type="interaction">
    <interactant intactId="EBI-1805738">
        <id>Q8IWL3</id>
    </interactant>
    <interactant intactId="EBI-1210654">
        <id>P42694</id>
        <label>HELZ</label>
    </interactant>
    <organismsDiffer>false</organismsDiffer>
    <experiments>4</experiments>
</comment>
<comment type="interaction">
    <interactant intactId="EBI-1805738">
        <id>Q8IWL3</id>
    </interactant>
    <interactant intactId="EBI-1805738">
        <id>Q8IWL3</id>
        <label>HSCB</label>
    </interactant>
    <organismsDiffer>false</organismsDiffer>
    <experiments>3</experiments>
</comment>
<comment type="interaction">
    <interactant intactId="EBI-1805738">
        <id>Q8IWL3</id>
    </interactant>
    <interactant intactId="EBI-354932">
        <id>P38646</id>
        <label>HSPA9</label>
    </interactant>
    <organismsDiffer>false</organismsDiffer>
    <experiments>14</experiments>
</comment>
<comment type="interaction">
    <interactant intactId="EBI-1805738">
        <id>Q8IWL3</id>
    </interactant>
    <interactant intactId="EBI-13943106">
        <id>Q5U5X0</id>
        <label>LYRM7</label>
    </interactant>
    <organismsDiffer>false</organismsDiffer>
    <experiments>7</experiments>
</comment>
<comment type="interaction">
    <interactant intactId="EBI-1805738">
        <id>Q8IWL3</id>
    </interactant>
    <interactant intactId="EBI-713665">
        <id>P19404</id>
        <label>NDUFV2</label>
    </interactant>
    <organismsDiffer>false</organismsDiffer>
    <experiments>6</experiments>
</comment>
<comment type="interaction">
    <interactant intactId="EBI-1805738">
        <id>Q8IWL3</id>
    </interactant>
    <interactant intactId="EBI-358466">
        <id>P16083</id>
        <label>NQO2</label>
    </interactant>
    <organismsDiffer>false</organismsDiffer>
    <experiments>4</experiments>
</comment>
<comment type="interaction">
    <interactant intactId="EBI-1805738">
        <id>Q8IWL3</id>
    </interactant>
    <interactant intactId="EBI-12011488">
        <id>A6NFY7</id>
        <label>SDHAF1</label>
    </interactant>
    <organismsDiffer>false</organismsDiffer>
    <experiments>5</experiments>
</comment>
<comment type="interaction">
    <interactant intactId="EBI-1805738">
        <id>Q8IWL3</id>
    </interactant>
    <interactant intactId="EBI-1056481">
        <id>P21912</id>
        <label>SDHB</label>
    </interactant>
    <organismsDiffer>false</organismsDiffer>
    <experiments>22</experiments>
</comment>
<comment type="interaction">
    <interactant intactId="EBI-1805738">
        <id>Q8IWL3</id>
    </interactant>
    <interactant intactId="EBI-2511878">
        <id>Q96I99</id>
        <label>SUCLG2</label>
    </interactant>
    <organismsDiffer>false</organismsDiffer>
    <experiments>4</experiments>
</comment>
<comment type="subcellular location">
    <molecule>Iron-sulfur cluster co-chaperone protein HscB, cytoplasmic</molecule>
    <subcellularLocation>
        <location evidence="5 7">Cytoplasm</location>
    </subcellularLocation>
</comment>
<comment type="subcellular location">
    <molecule>Iron-sulfur cluster co-chaperone protein HscB, mitochondrial</molecule>
    <subcellularLocation>
        <location evidence="5">Mitochondrion</location>
    </subcellularLocation>
</comment>
<comment type="tissue specificity">
    <text evidence="3 5">Expressed in lung, brain, stomach, spleen, ovary, testis, liver, muscle and heart.</text>
</comment>
<comment type="disease" evidence="8">
    <disease id="DI-06225">
        <name>Anemia, sideroblastic, 5</name>
        <acronym>SIDBA5</acronym>
        <description>A form of sideroblastic anemia, a bone marrow disorder defined by the presence of pathologic iron deposits in erythroblast mitochondria. Sideroblastic anemia is characterized by anemia of varying severity, hypochromic peripheral erythrocytes, systemic iron overload secondary to chronic ineffective erythropoiesis, and the presence of bone marrow ringed sideroblasts. Sideroblasts are characterized by iron-loaded mitochondria clustered around the nucleus. SIDBA5 inheritance is autosomal recessive.</description>
        <dbReference type="MIM" id="619523"/>
    </disease>
    <text>The disease is caused by variants affecting the gene represented in this entry.</text>
</comment>
<comment type="similarity">
    <text evidence="10">Belongs to the HscB family.</text>
</comment>
<feature type="chain" id="PRO_0000446242" description="Iron-sulfur cluster co-chaperone protein HscB, cytoplasmic" evidence="11">
    <location>
        <begin position="1"/>
        <end position="235"/>
    </location>
</feature>
<feature type="chain" id="PRO_0000007262" description="Iron-sulfur cluster co-chaperone protein HscB, mitochondrial" evidence="2">
    <location>
        <begin position="30"/>
        <end position="235"/>
    </location>
</feature>
<feature type="domain" description="J">
    <location>
        <begin position="72"/>
        <end position="144"/>
    </location>
</feature>
<feature type="binding site" evidence="4 13">
    <location>
        <position position="41"/>
    </location>
    <ligand>
        <name>a divalent metal cation</name>
        <dbReference type="ChEBI" id="CHEBI:60240"/>
    </ligand>
</feature>
<feature type="binding site" evidence="4 13">
    <location>
        <position position="44"/>
    </location>
    <ligand>
        <name>a divalent metal cation</name>
        <dbReference type="ChEBI" id="CHEBI:60240"/>
    </ligand>
</feature>
<feature type="binding site" evidence="4 13">
    <location>
        <position position="58"/>
    </location>
    <ligand>
        <name>a divalent metal cation</name>
        <dbReference type="ChEBI" id="CHEBI:60240"/>
    </ligand>
</feature>
<feature type="binding site" evidence="4 13">
    <location>
        <position position="61"/>
    </location>
    <ligand>
        <name>a divalent metal cation</name>
        <dbReference type="ChEBI" id="CHEBI:60240"/>
    </ligand>
</feature>
<feature type="sequence variant" id="VAR_048916" description="In dbSNP:rs17886090.">
    <original>Y</original>
    <variation>C</variation>
    <location>
        <position position="73"/>
    </location>
</feature>
<feature type="sequence variant" id="VAR_048917" description="In dbSNP:rs17884212.">
    <original>I</original>
    <variation>M</variation>
    <location>
        <position position="163"/>
    </location>
</feature>
<feature type="mutagenesis site" description="Abolishes self-interaction and interaction with HSPA9 and the CIA complex but does not alter subcellular localization; when associated with S-44; S-58 and S-61." evidence="5 7">
    <original>C</original>
    <variation>S</variation>
    <location>
        <position position="41"/>
    </location>
</feature>
<feature type="mutagenesis site" description="Abolishes self-interaction and interaction with HSPA9 and the CIA complex but does not alter subcellular localization; when associated with S-41; S-58 and S-61." evidence="5 7">
    <original>C</original>
    <variation>S</variation>
    <location>
        <position position="44"/>
    </location>
</feature>
<feature type="mutagenesis site" description="Abolishes self-interaction and interaction with HSPA9 and the CIA complex but does not alter subcellular localization; when associated with S-41; S-44 and S-61." evidence="5 7">
    <original>C</original>
    <variation>S</variation>
    <location>
        <position position="58"/>
    </location>
</feature>
<feature type="mutagenesis site" description="Abolishes self-interaction and interaction with HSPA9 and the CIA complex but does not alter subcellular localization; when associated with S-41; S-44 and S-58." evidence="5 7">
    <original>C</original>
    <variation>S</variation>
    <location>
        <position position="61"/>
    </location>
</feature>
<feature type="mutagenesis site" description="Does not interact with HSPA9. Does not inhibit interaction with ISCU." evidence="5">
    <original>HPD</original>
    <variation>AAA</variation>
    <location>
        <begin position="102"/>
        <end position="104"/>
    </location>
</feature>
<feature type="sequence conflict" description="In Ref. 1; AAN85282." evidence="10" ref="1">
    <original>N</original>
    <variation>S</variation>
    <location>
        <position position="43"/>
    </location>
</feature>
<feature type="strand" evidence="14">
    <location>
        <begin position="42"/>
        <end position="44"/>
    </location>
</feature>
<feature type="turn" evidence="14">
    <location>
        <begin position="59"/>
        <end position="61"/>
    </location>
</feature>
<feature type="helix" evidence="14">
    <location>
        <begin position="73"/>
        <end position="76"/>
    </location>
</feature>
<feature type="helix" evidence="14">
    <location>
        <begin position="87"/>
        <end position="101"/>
    </location>
</feature>
<feature type="helix" evidence="14">
    <location>
        <begin position="103"/>
        <end position="106"/>
    </location>
</feature>
<feature type="helix" evidence="14">
    <location>
        <begin position="111"/>
        <end position="132"/>
    </location>
</feature>
<feature type="helix" evidence="14">
    <location>
        <begin position="134"/>
        <end position="144"/>
    </location>
</feature>
<feature type="strand" evidence="14">
    <location>
        <begin position="154"/>
        <end position="157"/>
    </location>
</feature>
<feature type="helix" evidence="14">
    <location>
        <begin position="159"/>
        <end position="174"/>
    </location>
</feature>
<feature type="helix" evidence="14">
    <location>
        <begin position="178"/>
        <end position="204"/>
    </location>
</feature>
<feature type="helix" evidence="14">
    <location>
        <begin position="208"/>
        <end position="231"/>
    </location>
</feature>
<feature type="turn" evidence="14">
    <location>
        <begin position="232"/>
        <end position="234"/>
    </location>
</feature>
<protein>
    <recommendedName>
        <fullName evidence="10">Iron-sulfur cluster co-chaperone protein HscB</fullName>
    </recommendedName>
    <alternativeName>
        <fullName>DnaJ homolog subfamily C member 20</fullName>
    </alternativeName>
    <component>
        <recommendedName>
            <fullName>Iron-sulfur cluster co-chaperone protein HscB, cytoplasmic</fullName>
            <shortName evidence="9">C-HSC20</shortName>
        </recommendedName>
    </component>
    <component>
        <recommendedName>
            <fullName>Iron-sulfur cluster co-chaperone protein HscB, mitochondrial</fullName>
        </recommendedName>
    </component>
</protein>
<proteinExistence type="evidence at protein level"/>
<dbReference type="EMBL" id="AY191719">
    <property type="protein sequence ID" value="AAN85282.1"/>
    <property type="molecule type" value="mRNA"/>
</dbReference>
<dbReference type="EMBL" id="CR456462">
    <property type="protein sequence ID" value="CAG30348.1"/>
    <property type="molecule type" value="mRNA"/>
</dbReference>
<dbReference type="EMBL" id="AL023494">
    <property type="status" value="NOT_ANNOTATED_CDS"/>
    <property type="molecule type" value="Genomic_DNA"/>
</dbReference>
<dbReference type="EMBL" id="AL117330">
    <property type="status" value="NOT_ANNOTATED_CDS"/>
    <property type="molecule type" value="Genomic_DNA"/>
</dbReference>
<dbReference type="EMBL" id="BC065569">
    <property type="protein sequence ID" value="AAH65569.1"/>
    <property type="molecule type" value="mRNA"/>
</dbReference>
<dbReference type="CCDS" id="CCDS13845.1"/>
<dbReference type="RefSeq" id="NP_741999.3">
    <property type="nucleotide sequence ID" value="NM_172002.4"/>
</dbReference>
<dbReference type="PDB" id="3BVO">
    <property type="method" value="X-ray"/>
    <property type="resolution" value="3.00 A"/>
    <property type="chains" value="A/B=30-235"/>
</dbReference>
<dbReference type="PDBsum" id="3BVO"/>
<dbReference type="SASBDB" id="Q8IWL3"/>
<dbReference type="SMR" id="Q8IWL3"/>
<dbReference type="BioGRID" id="127276">
    <property type="interactions" value="818"/>
</dbReference>
<dbReference type="DIP" id="DIP-46570N"/>
<dbReference type="FunCoup" id="Q8IWL3">
    <property type="interactions" value="2183"/>
</dbReference>
<dbReference type="IntAct" id="Q8IWL3">
    <property type="interactions" value="736"/>
</dbReference>
<dbReference type="STRING" id="9606.ENSP00000216027"/>
<dbReference type="iPTMnet" id="Q8IWL3"/>
<dbReference type="PhosphoSitePlus" id="Q8IWL3"/>
<dbReference type="BioMuta" id="HSCB"/>
<dbReference type="DMDM" id="60416441"/>
<dbReference type="jPOST" id="Q8IWL3"/>
<dbReference type="MassIVE" id="Q8IWL3"/>
<dbReference type="PaxDb" id="9606-ENSP00000216027"/>
<dbReference type="PeptideAtlas" id="Q8IWL3"/>
<dbReference type="ProteomicsDB" id="70870"/>
<dbReference type="Pumba" id="Q8IWL3"/>
<dbReference type="Antibodypedia" id="10209">
    <property type="antibodies" value="130 antibodies from 21 providers"/>
</dbReference>
<dbReference type="DNASU" id="150274"/>
<dbReference type="Ensembl" id="ENST00000216027.8">
    <property type="protein sequence ID" value="ENSP00000216027.3"/>
    <property type="gene ID" value="ENSG00000100209.11"/>
</dbReference>
<dbReference type="GeneID" id="150274"/>
<dbReference type="KEGG" id="hsa:150274"/>
<dbReference type="MANE-Select" id="ENST00000216027.8">
    <property type="protein sequence ID" value="ENSP00000216027.3"/>
    <property type="RefSeq nucleotide sequence ID" value="NM_172002.5"/>
    <property type="RefSeq protein sequence ID" value="NP_741999.3"/>
</dbReference>
<dbReference type="UCSC" id="uc003aea.4">
    <property type="organism name" value="human"/>
</dbReference>
<dbReference type="AGR" id="HGNC:28913"/>
<dbReference type="CTD" id="150274"/>
<dbReference type="DisGeNET" id="150274"/>
<dbReference type="GeneCards" id="HSCB"/>
<dbReference type="HGNC" id="HGNC:28913">
    <property type="gene designation" value="HSCB"/>
</dbReference>
<dbReference type="HPA" id="ENSG00000100209">
    <property type="expression patterns" value="Low tissue specificity"/>
</dbReference>
<dbReference type="MalaCards" id="HSCB"/>
<dbReference type="MIM" id="608142">
    <property type="type" value="gene"/>
</dbReference>
<dbReference type="MIM" id="619523">
    <property type="type" value="phenotype"/>
</dbReference>
<dbReference type="neXtProt" id="NX_Q8IWL3"/>
<dbReference type="OpenTargets" id="ENSG00000100209"/>
<dbReference type="PharmGKB" id="PA162391621"/>
<dbReference type="VEuPathDB" id="HostDB:ENSG00000100209"/>
<dbReference type="eggNOG" id="KOG3192">
    <property type="taxonomic scope" value="Eukaryota"/>
</dbReference>
<dbReference type="GeneTree" id="ENSGT00390000008206"/>
<dbReference type="HOGENOM" id="CLU_068529_0_2_1"/>
<dbReference type="InParanoid" id="Q8IWL3"/>
<dbReference type="OMA" id="LMFIERF"/>
<dbReference type="OrthoDB" id="448954at2759"/>
<dbReference type="PAN-GO" id="Q8IWL3">
    <property type="GO annotations" value="2 GO annotations based on evolutionary models"/>
</dbReference>
<dbReference type="PhylomeDB" id="Q8IWL3"/>
<dbReference type="TreeFam" id="TF319992"/>
<dbReference type="PathwayCommons" id="Q8IWL3"/>
<dbReference type="Reactome" id="R-HSA-1268020">
    <property type="pathway name" value="Mitochondrial protein import"/>
</dbReference>
<dbReference type="Reactome" id="R-HSA-1362409">
    <property type="pathway name" value="Mitochondrial iron-sulfur cluster biogenesis"/>
</dbReference>
<dbReference type="Reactome" id="R-HSA-6799198">
    <property type="pathway name" value="Complex I biogenesis"/>
</dbReference>
<dbReference type="Reactome" id="R-HSA-9865881">
    <property type="pathway name" value="Complex III assembly"/>
</dbReference>
<dbReference type="SignaLink" id="Q8IWL3"/>
<dbReference type="SIGNOR" id="Q8IWL3"/>
<dbReference type="UniPathway" id="UPA00266"/>
<dbReference type="BioGRID-ORCS" id="150274">
    <property type="hits" value="602 hits in 1177 CRISPR screens"/>
</dbReference>
<dbReference type="ChiTaRS" id="HSCB">
    <property type="organism name" value="human"/>
</dbReference>
<dbReference type="EvolutionaryTrace" id="Q8IWL3"/>
<dbReference type="GenomeRNAi" id="150274"/>
<dbReference type="Pharos" id="Q8IWL3">
    <property type="development level" value="Tbio"/>
</dbReference>
<dbReference type="PRO" id="PR:Q8IWL3"/>
<dbReference type="Proteomes" id="UP000005640">
    <property type="component" value="Chromosome 22"/>
</dbReference>
<dbReference type="RNAct" id="Q8IWL3">
    <property type="molecule type" value="protein"/>
</dbReference>
<dbReference type="Bgee" id="ENSG00000100209">
    <property type="expression patterns" value="Expressed in parotid gland and 187 other cell types or tissues"/>
</dbReference>
<dbReference type="ExpressionAtlas" id="Q8IWL3">
    <property type="expression patterns" value="baseline and differential"/>
</dbReference>
<dbReference type="GO" id="GO:0005737">
    <property type="term" value="C:cytoplasm"/>
    <property type="evidence" value="ECO:0000314"/>
    <property type="project" value="UniProtKB"/>
</dbReference>
<dbReference type="GO" id="GO:0005829">
    <property type="term" value="C:cytosol"/>
    <property type="evidence" value="ECO:0000314"/>
    <property type="project" value="HPA"/>
</dbReference>
<dbReference type="GO" id="GO:0005739">
    <property type="term" value="C:mitochondrion"/>
    <property type="evidence" value="ECO:0000314"/>
    <property type="project" value="UniProtKB"/>
</dbReference>
<dbReference type="GO" id="GO:0005654">
    <property type="term" value="C:nucleoplasm"/>
    <property type="evidence" value="ECO:0000314"/>
    <property type="project" value="HPA"/>
</dbReference>
<dbReference type="GO" id="GO:0001671">
    <property type="term" value="F:ATPase activator activity"/>
    <property type="evidence" value="ECO:0007669"/>
    <property type="project" value="InterPro"/>
</dbReference>
<dbReference type="GO" id="GO:0042802">
    <property type="term" value="F:identical protein binding"/>
    <property type="evidence" value="ECO:0000353"/>
    <property type="project" value="IntAct"/>
</dbReference>
<dbReference type="GO" id="GO:0046872">
    <property type="term" value="F:metal ion binding"/>
    <property type="evidence" value="ECO:0007669"/>
    <property type="project" value="UniProtKB-KW"/>
</dbReference>
<dbReference type="GO" id="GO:0051087">
    <property type="term" value="F:protein-folding chaperone binding"/>
    <property type="evidence" value="ECO:0007669"/>
    <property type="project" value="InterPro"/>
</dbReference>
<dbReference type="GO" id="GO:0044571">
    <property type="term" value="P:[2Fe-2S] cluster assembly"/>
    <property type="evidence" value="ECO:0000318"/>
    <property type="project" value="GO_Central"/>
</dbReference>
<dbReference type="GO" id="GO:0016226">
    <property type="term" value="P:iron-sulfur cluster assembly"/>
    <property type="evidence" value="ECO:0000315"/>
    <property type="project" value="UniProtKB"/>
</dbReference>
<dbReference type="GO" id="GO:0060319">
    <property type="term" value="P:primitive erythrocyte differentiation"/>
    <property type="evidence" value="ECO:0000250"/>
    <property type="project" value="UniProtKB"/>
</dbReference>
<dbReference type="GO" id="GO:0060215">
    <property type="term" value="P:primitive hemopoiesis"/>
    <property type="evidence" value="ECO:0000250"/>
    <property type="project" value="UniProtKB"/>
</dbReference>
<dbReference type="GO" id="GO:0051259">
    <property type="term" value="P:protein complex oligomerization"/>
    <property type="evidence" value="ECO:0007669"/>
    <property type="project" value="InterPro"/>
</dbReference>
<dbReference type="FunFam" id="1.20.1280.20:FF:000002">
    <property type="entry name" value="HscB mitochondrial iron-sulfur cluster co-chaperone"/>
    <property type="match status" value="1"/>
</dbReference>
<dbReference type="FunFam" id="1.10.287.110:FF:000042">
    <property type="entry name" value="Iron-sulfur cluster co-chaperone protein HscB, mitochondrial"/>
    <property type="match status" value="1"/>
</dbReference>
<dbReference type="Gene3D" id="1.10.287.110">
    <property type="entry name" value="DnaJ domain"/>
    <property type="match status" value="1"/>
</dbReference>
<dbReference type="Gene3D" id="1.20.1280.20">
    <property type="entry name" value="HscB, C-terminal domain"/>
    <property type="match status" value="1"/>
</dbReference>
<dbReference type="HAMAP" id="MF_00682">
    <property type="entry name" value="HscB"/>
    <property type="match status" value="1"/>
</dbReference>
<dbReference type="InterPro" id="IPR004640">
    <property type="entry name" value="HscB"/>
</dbReference>
<dbReference type="InterPro" id="IPR040682">
    <property type="entry name" value="HscB_4_cys"/>
</dbReference>
<dbReference type="InterPro" id="IPR036386">
    <property type="entry name" value="HscB_C_sf"/>
</dbReference>
<dbReference type="InterPro" id="IPR009073">
    <property type="entry name" value="HscB_oligo_C"/>
</dbReference>
<dbReference type="InterPro" id="IPR036869">
    <property type="entry name" value="J_dom_sf"/>
</dbReference>
<dbReference type="NCBIfam" id="TIGR00714">
    <property type="entry name" value="hscB"/>
    <property type="match status" value="1"/>
</dbReference>
<dbReference type="PANTHER" id="PTHR14021">
    <property type="entry name" value="IRON-SULFUR CLUSTER CO-CHAPERONE PROTEIN HSCB"/>
    <property type="match status" value="1"/>
</dbReference>
<dbReference type="PANTHER" id="PTHR14021:SF15">
    <property type="entry name" value="IRON-SULFUR CLUSTER CO-CHAPERONE PROTEIN HSCB"/>
    <property type="match status" value="1"/>
</dbReference>
<dbReference type="Pfam" id="PF18256">
    <property type="entry name" value="HscB_4_cys"/>
    <property type="match status" value="1"/>
</dbReference>
<dbReference type="Pfam" id="PF07743">
    <property type="entry name" value="HSCB_C"/>
    <property type="match status" value="1"/>
</dbReference>
<dbReference type="SUPFAM" id="SSF46565">
    <property type="entry name" value="Chaperone J-domain"/>
    <property type="match status" value="1"/>
</dbReference>
<dbReference type="SUPFAM" id="SSF47144">
    <property type="entry name" value="HSC20 (HSCB), C-terminal oligomerisation domain"/>
    <property type="match status" value="1"/>
</dbReference>
<accession>Q8IWL3</accession>
<accession>Q9BWS7</accession>
<name>HSC20_HUMAN</name>
<organism>
    <name type="scientific">Homo sapiens</name>
    <name type="common">Human</name>
    <dbReference type="NCBI Taxonomy" id="9606"/>
    <lineage>
        <taxon>Eukaryota</taxon>
        <taxon>Metazoa</taxon>
        <taxon>Chordata</taxon>
        <taxon>Craniata</taxon>
        <taxon>Vertebrata</taxon>
        <taxon>Euteleostomi</taxon>
        <taxon>Mammalia</taxon>
        <taxon>Eutheria</taxon>
        <taxon>Euarchontoglires</taxon>
        <taxon>Primates</taxon>
        <taxon>Haplorrhini</taxon>
        <taxon>Catarrhini</taxon>
        <taxon>Hominidae</taxon>
        <taxon>Homo</taxon>
    </lineage>
</organism>
<evidence type="ECO:0000250" key="1">
    <source>
        <dbReference type="UniProtKB" id="Q8K3A0"/>
    </source>
</evidence>
<evidence type="ECO:0000255" key="2"/>
<evidence type="ECO:0000269" key="3">
    <source>
    </source>
</evidence>
<evidence type="ECO:0000269" key="4">
    <source>
    </source>
</evidence>
<evidence type="ECO:0000269" key="5">
    <source>
    </source>
</evidence>
<evidence type="ECO:0000269" key="6">
    <source>
    </source>
</evidence>
<evidence type="ECO:0000269" key="7">
    <source>
    </source>
</evidence>
<evidence type="ECO:0000269" key="8">
    <source>
    </source>
</evidence>
<evidence type="ECO:0000303" key="9">
    <source>
    </source>
</evidence>
<evidence type="ECO:0000305" key="10"/>
<evidence type="ECO:0000305" key="11">
    <source>
    </source>
</evidence>
<evidence type="ECO:0000312" key="12">
    <source>
        <dbReference type="HGNC" id="HGNC:28913"/>
    </source>
</evidence>
<evidence type="ECO:0007744" key="13">
    <source>
        <dbReference type="PDB" id="3BVO"/>
    </source>
</evidence>
<evidence type="ECO:0007829" key="14">
    <source>
        <dbReference type="PDB" id="3BVO"/>
    </source>
</evidence>